<evidence type="ECO:0000255" key="1">
    <source>
        <dbReference type="HAMAP-Rule" id="MF_01868"/>
    </source>
</evidence>
<comment type="function">
    <text evidence="1">Catalyzes the dephosphorylation of heptose(II) of the outer membrane lipopolysaccharide core.</text>
</comment>
<comment type="pathway">
    <text evidence="1">Bacterial outer membrane biogenesis; lipopolysaccharide metabolism.</text>
</comment>
<comment type="subcellular location">
    <subcellularLocation>
        <location evidence="1">Periplasm</location>
    </subcellularLocation>
</comment>
<comment type="similarity">
    <text evidence="1">Belongs to the phosphoglycerate mutase family. Ais subfamily.</text>
</comment>
<organism>
    <name type="scientific">Salmonella newport (strain SL254)</name>
    <dbReference type="NCBI Taxonomy" id="423368"/>
    <lineage>
        <taxon>Bacteria</taxon>
        <taxon>Pseudomonadati</taxon>
        <taxon>Pseudomonadota</taxon>
        <taxon>Gammaproteobacteria</taxon>
        <taxon>Enterobacterales</taxon>
        <taxon>Enterobacteriaceae</taxon>
        <taxon>Salmonella</taxon>
    </lineage>
</organism>
<accession>B4SYW8</accession>
<name>AIS_SALNS</name>
<dbReference type="EC" id="3.1.3.-" evidence="1"/>
<dbReference type="EMBL" id="CP001113">
    <property type="protein sequence ID" value="ACF61643.1"/>
    <property type="molecule type" value="Genomic_DNA"/>
</dbReference>
<dbReference type="SMR" id="B4SYW8"/>
<dbReference type="KEGG" id="see:SNSL254_A2481"/>
<dbReference type="HOGENOM" id="CLU_106705_1_0_6"/>
<dbReference type="UniPathway" id="UPA00451"/>
<dbReference type="Proteomes" id="UP000008824">
    <property type="component" value="Chromosome"/>
</dbReference>
<dbReference type="GO" id="GO:0042597">
    <property type="term" value="C:periplasmic space"/>
    <property type="evidence" value="ECO:0007669"/>
    <property type="project" value="UniProtKB-SubCell"/>
</dbReference>
<dbReference type="GO" id="GO:0016791">
    <property type="term" value="F:phosphatase activity"/>
    <property type="evidence" value="ECO:0007669"/>
    <property type="project" value="UniProtKB-UniRule"/>
</dbReference>
<dbReference type="GO" id="GO:0008653">
    <property type="term" value="P:lipopolysaccharide metabolic process"/>
    <property type="evidence" value="ECO:0007669"/>
    <property type="project" value="UniProtKB-UniRule"/>
</dbReference>
<dbReference type="CDD" id="cd07040">
    <property type="entry name" value="HP"/>
    <property type="match status" value="1"/>
</dbReference>
<dbReference type="Gene3D" id="3.40.50.1240">
    <property type="entry name" value="Phosphoglycerate mutase-like"/>
    <property type="match status" value="1"/>
</dbReference>
<dbReference type="HAMAP" id="MF_01868">
    <property type="entry name" value="Ais"/>
    <property type="match status" value="1"/>
</dbReference>
<dbReference type="InterPro" id="IPR013078">
    <property type="entry name" value="His_Pase_superF_clade-1"/>
</dbReference>
<dbReference type="InterPro" id="IPR029033">
    <property type="entry name" value="His_PPase_superfam"/>
</dbReference>
<dbReference type="InterPro" id="IPR011310">
    <property type="entry name" value="LipoPS_heptP_Pase"/>
</dbReference>
<dbReference type="NCBIfam" id="NF011945">
    <property type="entry name" value="PRK15416.1"/>
    <property type="match status" value="1"/>
</dbReference>
<dbReference type="Pfam" id="PF00300">
    <property type="entry name" value="His_Phos_1"/>
    <property type="match status" value="1"/>
</dbReference>
<dbReference type="PIRSF" id="PIRSF011416">
    <property type="entry name" value="Ais-TraG-AfrS"/>
    <property type="match status" value="1"/>
</dbReference>
<dbReference type="SUPFAM" id="SSF53254">
    <property type="entry name" value="Phosphoglycerate mutase-like"/>
    <property type="match status" value="1"/>
</dbReference>
<proteinExistence type="inferred from homology"/>
<gene>
    <name evidence="1" type="primary">ais</name>
    <name type="ordered locus">SNSL254_A2481</name>
</gene>
<sequence>MLAFTLRFIKNKRYLATLAGALVIIAGLTSQHAWSGNGLPQINGKALAALAKQHPVVVLFRHAERCDRSDNTCLSDSTGITVNGAQNARALGKAFSADIQNYNLYSSNTVRTIQSATWFSAGRSLTVDKKMMDCGSGIYASINTLLKKSQNKNIVIFTHNHCLTYIAKNKRGVKFDPDYLNALVMHAENGKLFLDGEFVPG</sequence>
<reference key="1">
    <citation type="journal article" date="2011" name="J. Bacteriol.">
        <title>Comparative genomics of 28 Salmonella enterica isolates: evidence for CRISPR-mediated adaptive sublineage evolution.</title>
        <authorList>
            <person name="Fricke W.F."/>
            <person name="Mammel M.K."/>
            <person name="McDermott P.F."/>
            <person name="Tartera C."/>
            <person name="White D.G."/>
            <person name="Leclerc J.E."/>
            <person name="Ravel J."/>
            <person name="Cebula T.A."/>
        </authorList>
    </citation>
    <scope>NUCLEOTIDE SEQUENCE [LARGE SCALE GENOMIC DNA]</scope>
    <source>
        <strain>SL254</strain>
    </source>
</reference>
<feature type="signal peptide" evidence="1">
    <location>
        <begin position="1"/>
        <end position="35"/>
    </location>
</feature>
<feature type="chain" id="PRO_0000380579" description="Lipopolysaccharide core heptose(II)-phosphate phosphatase">
    <location>
        <begin position="36"/>
        <end position="201"/>
    </location>
</feature>
<protein>
    <recommendedName>
        <fullName evidence="1">Lipopolysaccharide core heptose(II)-phosphate phosphatase</fullName>
        <ecNumber evidence="1">3.1.3.-</ecNumber>
    </recommendedName>
</protein>
<keyword id="KW-0378">Hydrolase</keyword>
<keyword id="KW-0574">Periplasm</keyword>
<keyword id="KW-0732">Signal</keyword>